<proteinExistence type="evidence at protein level"/>
<organism>
    <name type="scientific">Homo sapiens</name>
    <name type="common">Human</name>
    <dbReference type="NCBI Taxonomy" id="9606"/>
    <lineage>
        <taxon>Eukaryota</taxon>
        <taxon>Metazoa</taxon>
        <taxon>Chordata</taxon>
        <taxon>Craniata</taxon>
        <taxon>Vertebrata</taxon>
        <taxon>Euteleostomi</taxon>
        <taxon>Mammalia</taxon>
        <taxon>Eutheria</taxon>
        <taxon>Euarchontoglires</taxon>
        <taxon>Primates</taxon>
        <taxon>Haplorrhini</taxon>
        <taxon>Catarrhini</taxon>
        <taxon>Hominidae</taxon>
        <taxon>Homo</taxon>
    </lineage>
</organism>
<comment type="function">
    <molecule>Isoform 1</molecule>
    <text evidence="3 4">Paired-like homeobox transcription factor involved in embryogenesis (PubMed:27578796, PubMed:30479355). May act as a regulator of embryo genome activation (PubMed:27578796). Binds to a 36 bp DNA elements containing a 5'-TAATCC-3' sequence motif, referred to as EEA motif (EGA-enriched Alu-motif), present in the promoters of target genes activated in early embryos (PubMed:27578796, PubMed:30479355).</text>
</comment>
<comment type="function">
    <molecule>Isoform 2</molecule>
    <text evidence="3">Inactive transcriptional activity.</text>
</comment>
<comment type="interaction">
    <interactant intactId="EBI-17490413">
        <id>A8MZ59</id>
    </interactant>
    <interactant intactId="EBI-1754287">
        <id>Q9NRZ5</id>
        <label>AGPAT4</label>
    </interactant>
    <organismsDiffer>false</organismsDiffer>
    <experiments>3</experiments>
</comment>
<comment type="interaction">
    <interactant intactId="EBI-17490413">
        <id>A8MZ59</id>
    </interactant>
    <interactant intactId="EBI-11957045">
        <id>Q9NVV5-2</id>
        <label>AIG1</label>
    </interactant>
    <organismsDiffer>false</organismsDiffer>
    <experiments>3</experiments>
</comment>
<comment type="interaction">
    <interactant intactId="EBI-17490413">
        <id>A8MZ59</id>
    </interactant>
    <interactant intactId="EBI-12701138">
        <id>P41181</id>
        <label>AQP2</label>
    </interactant>
    <organismsDiffer>false</organismsDiffer>
    <experiments>3</experiments>
</comment>
<comment type="interaction">
    <interactant intactId="EBI-17490413">
        <id>A8MZ59</id>
    </interactant>
    <interactant intactId="EBI-2808854">
        <id>Q92482</id>
        <label>AQP3</label>
    </interactant>
    <organismsDiffer>false</organismsDiffer>
    <experiments>3</experiments>
</comment>
<comment type="interaction">
    <interactant intactId="EBI-17490413">
        <id>A8MZ59</id>
    </interactant>
    <interactant intactId="EBI-1172335">
        <id>P07306</id>
        <label>ASGR1</label>
    </interactant>
    <organismsDiffer>false</organismsDiffer>
    <experiments>3</experiments>
</comment>
<comment type="interaction">
    <interactant intactId="EBI-17490413">
        <id>A8MZ59</id>
    </interactant>
    <interactant intactId="EBI-12062109">
        <id>Q86Z23</id>
        <label>C1QL4</label>
    </interactant>
    <organismsDiffer>false</organismsDiffer>
    <experiments>3</experiments>
</comment>
<comment type="interaction">
    <interactant intactId="EBI-17490413">
        <id>A8MZ59</id>
    </interactant>
    <interactant intactId="EBI-3913685">
        <id>O95674</id>
        <label>CDS2</label>
    </interactant>
    <organismsDiffer>false</organismsDiffer>
    <experiments>3</experiments>
</comment>
<comment type="interaction">
    <interactant intactId="EBI-17490413">
        <id>A8MZ59</id>
    </interactant>
    <interactant intactId="EBI-7247651">
        <id>Q96MX0</id>
        <label>CMTM3</label>
    </interactant>
    <organismsDiffer>false</organismsDiffer>
    <experiments>3</experiments>
</comment>
<comment type="interaction">
    <interactant intactId="EBI-17490413">
        <id>A8MZ59</id>
    </interactant>
    <interactant intactId="EBI-11522780">
        <id>Q96DZ9-2</id>
        <label>CMTM5</label>
    </interactant>
    <organismsDiffer>false</organismsDiffer>
    <experiments>3</experiments>
</comment>
<comment type="interaction">
    <interactant intactId="EBI-17490413">
        <id>A8MZ59</id>
    </interactant>
    <interactant intactId="EBI-12172273">
        <id>O95406</id>
        <label>CNIH1</label>
    </interactant>
    <organismsDiffer>false</organismsDiffer>
    <experiments>3</experiments>
</comment>
<comment type="interaction">
    <interactant intactId="EBI-17490413">
        <id>A8MZ59</id>
    </interactant>
    <interactant intactId="EBI-12208021">
        <id>Q8TBE1</id>
        <label>CNIH3</label>
    </interactant>
    <organismsDiffer>false</organismsDiffer>
    <experiments>3</experiments>
</comment>
<comment type="interaction">
    <interactant intactId="EBI-17490413">
        <id>A8MZ59</id>
    </interactant>
    <interactant intactId="EBI-3911467">
        <id>Q07325</id>
        <label>CXCL9</label>
    </interactant>
    <organismsDiffer>false</organismsDiffer>
    <experiments>3</experiments>
</comment>
<comment type="interaction">
    <interactant intactId="EBI-17490413">
        <id>A8MZ59</id>
    </interactant>
    <interactant intactId="EBI-3907816">
        <id>P54852</id>
        <label>EMP3</label>
    </interactant>
    <organismsDiffer>false</organismsDiffer>
    <experiments>3</experiments>
</comment>
<comment type="interaction">
    <interactant intactId="EBI-17490413">
        <id>A8MZ59</id>
    </interactant>
    <interactant intactId="EBI-12279764">
        <id>O75355-2</id>
        <label>ENTPD3</label>
    </interactant>
    <organismsDiffer>false</organismsDiffer>
    <experiments>3</experiments>
</comment>
<comment type="interaction">
    <interactant intactId="EBI-17490413">
        <id>A8MZ59</id>
    </interactant>
    <interactant intactId="EBI-13383724">
        <id>Q8N5W8</id>
        <label>FAM24B</label>
    </interactant>
    <organismsDiffer>false</organismsDiffer>
    <experiments>3</experiments>
</comment>
<comment type="interaction">
    <interactant intactId="EBI-17490413">
        <id>A8MZ59</id>
    </interactant>
    <interactant intactId="EBI-746917">
        <id>O75084</id>
        <label>FZD7</label>
    </interactant>
    <organismsDiffer>false</organismsDiffer>
    <experiments>3</experiments>
</comment>
<comment type="interaction">
    <interactant intactId="EBI-17490413">
        <id>A8MZ59</id>
    </interactant>
    <interactant intactId="EBI-4401517">
        <id>O14653</id>
        <label>GOSR2</label>
    </interactant>
    <organismsDiffer>false</organismsDiffer>
    <experiments>3</experiments>
</comment>
<comment type="interaction">
    <interactant intactId="EBI-17490413">
        <id>A8MZ59</id>
    </interactant>
    <interactant intactId="EBI-8632435">
        <id>P43628</id>
        <label>KIR2DL3</label>
    </interactant>
    <organismsDiffer>false</organismsDiffer>
    <experiments>3</experiments>
</comment>
<comment type="interaction">
    <interactant intactId="EBI-17490413">
        <id>A8MZ59</id>
    </interactant>
    <interactant intactId="EBI-8070286">
        <id>O43561-2</id>
        <label>LAT</label>
    </interactant>
    <organismsDiffer>false</organismsDiffer>
    <experiments>3</experiments>
</comment>
<comment type="interaction">
    <interactant intactId="EBI-17490413">
        <id>A8MZ59</id>
    </interactant>
    <interactant intactId="EBI-1055359">
        <id>Q9BQC6</id>
        <label>MRPL57</label>
    </interactant>
    <organismsDiffer>false</organismsDiffer>
    <experiments>3</experiments>
</comment>
<comment type="interaction">
    <interactant intactId="EBI-17490413">
        <id>A8MZ59</id>
    </interactant>
    <interactant intactId="EBI-2808234">
        <id>P11836</id>
        <label>MS4A1</label>
    </interactant>
    <organismsDiffer>false</organismsDiffer>
    <experiments>3</experiments>
</comment>
<comment type="interaction">
    <interactant intactId="EBI-17490413">
        <id>A8MZ59</id>
    </interactant>
    <interactant intactId="EBI-3921185">
        <id>Q9H115</id>
        <label>NAPB</label>
    </interactant>
    <organismsDiffer>false</organismsDiffer>
    <experiments>3</experiments>
</comment>
<comment type="interaction">
    <interactant intactId="EBI-17490413">
        <id>A8MZ59</id>
    </interactant>
    <interactant intactId="EBI-11978907">
        <id>Q9ULP0-2</id>
        <label>NDRG4</label>
    </interactant>
    <organismsDiffer>false</organismsDiffer>
    <experiments>3</experiments>
</comment>
<comment type="interaction">
    <interactant intactId="EBI-17490413">
        <id>A8MZ59</id>
    </interactant>
    <interactant intactId="EBI-2804156">
        <id>Q6UX06</id>
        <label>OLFM4</label>
    </interactant>
    <organismsDiffer>false</organismsDiffer>
    <experiments>3</experiments>
</comment>
<comment type="interaction">
    <interactant intactId="EBI-17490413">
        <id>A8MZ59</id>
    </interactant>
    <interactant intactId="EBI-12188331">
        <id>P60201-2</id>
        <label>PLP1</label>
    </interactant>
    <organismsDiffer>false</organismsDiffer>
    <experiments>3</experiments>
</comment>
<comment type="interaction">
    <interactant intactId="EBI-17490413">
        <id>A8MZ59</id>
    </interactant>
    <interactant intactId="EBI-8652812">
        <id>P54315</id>
        <label>PNLIPRP1</label>
    </interactant>
    <organismsDiffer>false</organismsDiffer>
    <experiments>3</experiments>
</comment>
<comment type="interaction">
    <interactant intactId="EBI-17490413">
        <id>A8MZ59</id>
    </interactant>
    <interactant intactId="EBI-10173935">
        <id>A5D903</id>
        <label>PRB1</label>
    </interactant>
    <organismsDiffer>false</organismsDiffer>
    <experiments>3</experiments>
</comment>
<comment type="interaction">
    <interactant intactId="EBI-17490413">
        <id>A8MZ59</id>
    </interactant>
    <interactant intactId="EBI-12938720">
        <id>Q8WWT9</id>
        <label>SLC13A3</label>
    </interactant>
    <organismsDiffer>false</organismsDiffer>
    <experiments>3</experiments>
</comment>
<comment type="interaction">
    <interactant intactId="EBI-17490413">
        <id>A8MZ59</id>
    </interactant>
    <interactant intactId="EBI-10262251">
        <id>Q8IWU4</id>
        <label>SLC30A8</label>
    </interactant>
    <organismsDiffer>false</organismsDiffer>
    <experiments>3</experiments>
</comment>
<comment type="interaction">
    <interactant intactId="EBI-17490413">
        <id>A8MZ59</id>
    </interactant>
    <interactant intactId="EBI-10290130">
        <id>Q96JW4</id>
        <label>SLC41A2</label>
    </interactant>
    <organismsDiffer>false</organismsDiffer>
    <experiments>3</experiments>
</comment>
<comment type="interaction">
    <interactant intactId="EBI-17490413">
        <id>A8MZ59</id>
    </interactant>
    <interactant intactId="EBI-738687">
        <id>P02808</id>
        <label>STATH</label>
    </interactant>
    <organismsDiffer>false</organismsDiffer>
    <experiments>3</experiments>
</comment>
<comment type="interaction">
    <interactant intactId="EBI-17490413">
        <id>A8MZ59</id>
    </interactant>
    <interactant intactId="EBI-714319">
        <id>P02787</id>
        <label>TF</label>
    </interactant>
    <organismsDiffer>false</organismsDiffer>
    <experiments>3</experiments>
</comment>
<comment type="interaction">
    <interactant intactId="EBI-17490413">
        <id>A8MZ59</id>
    </interactant>
    <interactant intactId="EBI-10694905">
        <id>Q5BJH2-2</id>
        <label>TMEM128</label>
    </interactant>
    <organismsDiffer>false</organismsDiffer>
    <experiments>3</experiments>
</comment>
<comment type="interaction">
    <interactant intactId="EBI-17490413">
        <id>A8MZ59</id>
    </interactant>
    <interactant intactId="EBI-348587">
        <id>Q9BVK8</id>
        <label>TMEM147</label>
    </interactant>
    <organismsDiffer>false</organismsDiffer>
    <experiments>3</experiments>
</comment>
<comment type="interaction">
    <interactant intactId="EBI-17490413">
        <id>A8MZ59</id>
    </interactant>
    <interactant intactId="EBI-13046724">
        <id>Q14656</id>
        <label>TMEM187</label>
    </interactant>
    <organismsDiffer>false</organismsDiffer>
    <experiments>3</experiments>
</comment>
<comment type="interaction">
    <interactant intactId="EBI-17490413">
        <id>A8MZ59</id>
    </interactant>
    <interactant intactId="EBI-11956809">
        <id>Q8TBM7</id>
        <label>TMEM254</label>
    </interactant>
    <organismsDiffer>false</organismsDiffer>
    <experiments>3</experiments>
</comment>
<comment type="interaction">
    <interactant intactId="EBI-17490413">
        <id>A8MZ59</id>
    </interactant>
    <interactant intactId="EBI-2852148">
        <id>Q9H2L4</id>
        <label>TMEM60</label>
    </interactant>
    <organismsDiffer>false</organismsDiffer>
    <experiments>3</experiments>
</comment>
<comment type="interaction">
    <interactant intactId="EBI-17490413">
        <id>A8MZ59</id>
    </interactant>
    <interactant intactId="EBI-12111910">
        <id>Q5BJF2</id>
        <label>TMEM97</label>
    </interactant>
    <organismsDiffer>false</organismsDiffer>
    <experiments>3</experiments>
</comment>
<comment type="interaction">
    <interactant intactId="EBI-17490413">
        <id>A8MZ59</id>
    </interactant>
    <interactant intactId="EBI-6623146">
        <id>P30536</id>
        <label>TSPO</label>
    </interactant>
    <organismsDiffer>false</organismsDiffer>
    <experiments>3</experiments>
</comment>
<comment type="interaction">
    <interactant intactId="EBI-17490413">
        <id>A8MZ59</id>
    </interactant>
    <interactant intactId="EBI-10243654">
        <id>Q5BVD1</id>
        <label>TTMP</label>
    </interactant>
    <organismsDiffer>false</organismsDiffer>
    <experiments>3</experiments>
</comment>
<comment type="interaction">
    <interactant intactId="EBI-17490413">
        <id>A8MZ59</id>
    </interactant>
    <interactant intactId="EBI-10210710">
        <id>P49638</id>
        <label>TTPA</label>
    </interactant>
    <organismsDiffer>false</organismsDiffer>
    <experiments>3</experiments>
</comment>
<comment type="interaction">
    <interactant intactId="EBI-17490413">
        <id>A8MZ59</id>
    </interactant>
    <interactant intactId="EBI-4401271">
        <id>Q9H1C4</id>
        <label>UNC93B1</label>
    </interactant>
    <organismsDiffer>false</organismsDiffer>
    <experiments>3</experiments>
</comment>
<comment type="interaction">
    <interactant intactId="EBI-17490413">
        <id>A8MZ59</id>
    </interactant>
    <interactant intactId="EBI-744953">
        <id>O75379</id>
        <label>VAMP4</label>
    </interactant>
    <organismsDiffer>false</organismsDiffer>
    <experiments>3</experiments>
</comment>
<comment type="interaction">
    <interactant intactId="EBI-17490413">
        <id>A8MZ59</id>
    </interactant>
    <interactant intactId="EBI-718439">
        <id>O95159</id>
        <label>ZFPL1</label>
    </interactant>
    <organismsDiffer>false</organismsDiffer>
    <experiments>3</experiments>
</comment>
<comment type="interaction">
    <interactant intactId="EBI-17490413">
        <id>A8MZ59</id>
    </interactant>
    <interactant intactId="EBI-745608">
        <id>O15015</id>
        <label>ZNF646</label>
    </interactant>
    <organismsDiffer>false</organismsDiffer>
    <experiments>3</experiments>
</comment>
<comment type="subcellular location">
    <subcellularLocation>
        <location evidence="3">Nucleus</location>
    </subcellularLocation>
</comment>
<comment type="alternative products">
    <event type="alternative initiation"/>
    <isoform>
        <id>A8MZ59-2</id>
        <name>1</name>
        <name evidence="5">LEUTX.n</name>
        <sequence type="displayed"/>
    </isoform>
    <isoform>
        <id>A8MZ59-1</id>
        <name>2</name>
        <name>LEUTX.R</name>
        <sequence type="described" ref="VSP_060567"/>
    </isoform>
</comment>
<comment type="developmental stage">
    <molecule>Isoform 1</molecule>
    <text evidence="3">During early embryo development, its expression is restricted to the 4-cell to 8-cell stage of the preimplantation embryo.</text>
</comment>
<comment type="domain">
    <molecule>Isoform 1</molecule>
    <text evidence="4">The homeobox contain essential residues (Ile-54, Lys-57, Ala-61) for binding to the 5'-TAATCC-3' motif of the targe gene promoters.</text>
</comment>
<comment type="domain">
    <molecule>Isoform 2</molecule>
    <text evidence="3">The homeobox is incomplete and cannot bind to the 36 bp motif found in the promoters of the target genes.</text>
</comment>
<comment type="domain">
    <text evidence="8">The 9aaTAD motif is a conserved putative nine amino acid transactivation motifs in C-terminus of the LEUTX region.</text>
</comment>
<comment type="similarity">
    <text evidence="7">Belongs to the paired homeobox family.</text>
</comment>
<reference key="1">
    <citation type="journal article" date="2004" name="Nature">
        <title>The DNA sequence and biology of human chromosome 19.</title>
        <authorList>
            <person name="Grimwood J."/>
            <person name="Gordon L.A."/>
            <person name="Olsen A.S."/>
            <person name="Terry A."/>
            <person name="Schmutz J."/>
            <person name="Lamerdin J.E."/>
            <person name="Hellsten U."/>
            <person name="Goodstein D."/>
            <person name="Couronne O."/>
            <person name="Tran-Gyamfi M."/>
            <person name="Aerts A."/>
            <person name="Altherr M."/>
            <person name="Ashworth L."/>
            <person name="Bajorek E."/>
            <person name="Black S."/>
            <person name="Branscomb E."/>
            <person name="Caenepeel S."/>
            <person name="Carrano A.V."/>
            <person name="Caoile C."/>
            <person name="Chan Y.M."/>
            <person name="Christensen M."/>
            <person name="Cleland C.A."/>
            <person name="Copeland A."/>
            <person name="Dalin E."/>
            <person name="Dehal P."/>
            <person name="Denys M."/>
            <person name="Detter J.C."/>
            <person name="Escobar J."/>
            <person name="Flowers D."/>
            <person name="Fotopulos D."/>
            <person name="Garcia C."/>
            <person name="Georgescu A.M."/>
            <person name="Glavina T."/>
            <person name="Gomez M."/>
            <person name="Gonzales E."/>
            <person name="Groza M."/>
            <person name="Hammon N."/>
            <person name="Hawkins T."/>
            <person name="Haydu L."/>
            <person name="Ho I."/>
            <person name="Huang W."/>
            <person name="Israni S."/>
            <person name="Jett J."/>
            <person name="Kadner K."/>
            <person name="Kimball H."/>
            <person name="Kobayashi A."/>
            <person name="Larionov V."/>
            <person name="Leem S.-H."/>
            <person name="Lopez F."/>
            <person name="Lou Y."/>
            <person name="Lowry S."/>
            <person name="Malfatti S."/>
            <person name="Martinez D."/>
            <person name="McCready P.M."/>
            <person name="Medina C."/>
            <person name="Morgan J."/>
            <person name="Nelson K."/>
            <person name="Nolan M."/>
            <person name="Ovcharenko I."/>
            <person name="Pitluck S."/>
            <person name="Pollard M."/>
            <person name="Popkie A.P."/>
            <person name="Predki P."/>
            <person name="Quan G."/>
            <person name="Ramirez L."/>
            <person name="Rash S."/>
            <person name="Retterer J."/>
            <person name="Rodriguez A."/>
            <person name="Rogers S."/>
            <person name="Salamov A."/>
            <person name="Salazar A."/>
            <person name="She X."/>
            <person name="Smith D."/>
            <person name="Slezak T."/>
            <person name="Solovyev V."/>
            <person name="Thayer N."/>
            <person name="Tice H."/>
            <person name="Tsai M."/>
            <person name="Ustaszewska A."/>
            <person name="Vo N."/>
            <person name="Wagner M."/>
            <person name="Wheeler J."/>
            <person name="Wu K."/>
            <person name="Xie G."/>
            <person name="Yang J."/>
            <person name="Dubchak I."/>
            <person name="Furey T.S."/>
            <person name="DeJong P."/>
            <person name="Dickson M."/>
            <person name="Gordon D."/>
            <person name="Eichler E.E."/>
            <person name="Pennacchio L.A."/>
            <person name="Richardson P."/>
            <person name="Stubbs L."/>
            <person name="Rokhsar D.S."/>
            <person name="Myers R.M."/>
            <person name="Rubin E.M."/>
            <person name="Lucas S.M."/>
        </authorList>
    </citation>
    <scope>NUCLEOTIDE SEQUENCE [LARGE SCALE GENOMIC DNA]</scope>
</reference>
<reference key="2">
    <citation type="submission" date="2004-06" db="EMBL/GenBank/DDBJ databases">
        <title>Cloning of human full open reading frames in Gateway(TM) system entry vector (pDONR201).</title>
        <authorList>
            <person name="Ebert L."/>
            <person name="Schick M."/>
            <person name="Neubert P."/>
            <person name="Schatten R."/>
            <person name="Henze S."/>
            <person name="Korn B."/>
        </authorList>
    </citation>
    <scope>NUCLEOTIDE SEQUENCE [LARGE SCALE MRNA] (ISOFORM 2)</scope>
</reference>
<reference key="3">
    <citation type="submission" date="2006-03" db="EMBL/GenBank/DDBJ databases">
        <title>Exhaustive RT-PCR and sequencing of all novel TWINSCAN predictions in human.</title>
        <authorList>
            <person name="Stevens M."/>
            <person name="Wei C."/>
            <person name="Gross S.S."/>
            <person name="McPherson J."/>
            <person name="Brent M.R."/>
        </authorList>
    </citation>
    <scope>NUCLEOTIDE SEQUENCE [LARGE SCALE MRNA] (ISOFORM 2)</scope>
</reference>
<reference key="4">
    <citation type="journal article" date="2007" name="BMC Biol.">
        <title>Classification and nomenclature of all human homeobox genes.</title>
        <authorList>
            <person name="Holland P.W.H."/>
            <person name="Booth H.A.F."/>
            <person name="Bruford E.A."/>
        </authorList>
    </citation>
    <scope>IDENTIFICATION OF ISOFORM 2</scope>
</reference>
<reference key="5">
    <citation type="journal article" date="2016" name="Development">
        <title>The human PRD-like homeobox gene LEUTX has a central role in embryo genome activation.</title>
        <authorList>
            <person name="Jouhilahti E.M."/>
            <person name="Madissoon E."/>
            <person name="Vesterlund L."/>
            <person name="Toehoenen V."/>
            <person name="Krjutskov K."/>
            <person name="Plaza Reyes A."/>
            <person name="Petropoulos S."/>
            <person name="Maansson R."/>
            <person name="Linnarsson S."/>
            <person name="Buerglin T."/>
            <person name="Lanner F."/>
            <person name="Hovatta O."/>
            <person name="Katayama S."/>
            <person name="Kere J."/>
        </authorList>
    </citation>
    <scope>FUNCTION</scope>
    <scope>CHARACTERIZATION OF ISOFORM 1</scope>
    <scope>DEVELOPMENTAL STAGE</scope>
    <scope>SUBCELLULAR LOCATION</scope>
    <scope>DOMAIN</scope>
</reference>
<reference key="6">
    <citation type="journal article" date="2018" name="Sci. Rep.">
        <title>Phylogenetic and mutational analyses of human LEUTX, a homeobox gene implicated in embryogenesis.</title>
        <authorList>
            <person name="Katayama S."/>
            <person name="Ranga V."/>
            <person name="Jouhilahti E.M."/>
            <person name="Airenne T.T."/>
            <person name="Johnson M.S."/>
            <person name="Mukherjee K."/>
            <person name="Buerglin T.R."/>
            <person name="Kere J."/>
        </authorList>
    </citation>
    <scope>FUNCTION</scope>
    <scope>CHARACTERIZATION OF ISOFORM 1</scope>
    <scope>MUTAGENESIS OF ILE-54 AND ALA-61</scope>
    <scope>DOMAIN</scope>
</reference>
<name>LEUTX_HUMAN</name>
<dbReference type="EMBL" id="AC005393">
    <property type="status" value="NOT_ANNOTATED_CDS"/>
    <property type="molecule type" value="Genomic_DNA"/>
</dbReference>
<dbReference type="EMBL" id="CR746510">
    <property type="status" value="NOT_ANNOTATED_CDS"/>
    <property type="molecule type" value="mRNA"/>
</dbReference>
<dbReference type="EMBL" id="DY655817">
    <property type="status" value="NOT_ANNOTATED_CDS"/>
    <property type="molecule type" value="mRNA"/>
</dbReference>
<dbReference type="CCDS" id="CCDS92615.1">
    <molecule id="A8MZ59-2"/>
</dbReference>
<dbReference type="RefSeq" id="NP_001137304.1">
    <molecule id="A8MZ59-1"/>
    <property type="nucleotide sequence ID" value="NM_001143832.2"/>
</dbReference>
<dbReference type="RefSeq" id="NP_001369274.1">
    <molecule id="A8MZ59-2"/>
    <property type="nucleotide sequence ID" value="NM_001382345.1"/>
</dbReference>
<dbReference type="SMR" id="A8MZ59"/>
<dbReference type="BioGRID" id="131206">
    <property type="interactions" value="46"/>
</dbReference>
<dbReference type="FunCoup" id="A8MZ59">
    <property type="interactions" value="71"/>
</dbReference>
<dbReference type="IntAct" id="A8MZ59">
    <property type="interactions" value="45"/>
</dbReference>
<dbReference type="STRING" id="9606.ENSP00000380053"/>
<dbReference type="GlyGen" id="A8MZ59">
    <property type="glycosylation" value="1 site, 1 O-linked glycan (1 site)"/>
</dbReference>
<dbReference type="BioMuta" id="LEUTX"/>
<dbReference type="PaxDb" id="9606-ENSP00000380053"/>
<dbReference type="Antibodypedia" id="48021">
    <property type="antibodies" value="8 antibodies from 5 providers"/>
</dbReference>
<dbReference type="DNASU" id="342900"/>
<dbReference type="Ensembl" id="ENST00000396841.4">
    <molecule id="A8MZ59-1"/>
    <property type="protein sequence ID" value="ENSP00000380053.3"/>
    <property type="gene ID" value="ENSG00000213921.8"/>
</dbReference>
<dbReference type="Ensembl" id="ENST00000629267.1">
    <molecule id="A8MZ59-1"/>
    <property type="protein sequence ID" value="ENSP00000486698.1"/>
    <property type="gene ID" value="ENSG00000280774.2"/>
</dbReference>
<dbReference type="Ensembl" id="ENST00000638280.2">
    <molecule id="A8MZ59-2"/>
    <property type="protein sequence ID" value="ENSP00000491740.1"/>
    <property type="gene ID" value="ENSG00000213921.8"/>
</dbReference>
<dbReference type="Ensembl" id="ENST00000640845.1">
    <molecule id="A8MZ59-2"/>
    <property type="protein sequence ID" value="ENSP00000491781.1"/>
    <property type="gene ID" value="ENSG00000280774.2"/>
</dbReference>
<dbReference type="GeneID" id="342900"/>
<dbReference type="KEGG" id="hsa:342900"/>
<dbReference type="MANE-Select" id="ENST00000638280.2">
    <property type="protein sequence ID" value="ENSP00000491740.1"/>
    <property type="RefSeq nucleotide sequence ID" value="NM_001382345.1"/>
    <property type="RefSeq protein sequence ID" value="NP_001369274.1"/>
</dbReference>
<dbReference type="UCSC" id="uc010xvg.3">
    <molecule id="A8MZ59-2"/>
    <property type="organism name" value="human"/>
</dbReference>
<dbReference type="AGR" id="HGNC:31953"/>
<dbReference type="CTD" id="342900"/>
<dbReference type="DisGeNET" id="342900"/>
<dbReference type="GeneCards" id="LEUTX"/>
<dbReference type="HGNC" id="HGNC:31953">
    <property type="gene designation" value="LEUTX"/>
</dbReference>
<dbReference type="HPA" id="ENSG00000213921">
    <property type="expression patterns" value="Not detected"/>
</dbReference>
<dbReference type="MIM" id="618701">
    <property type="type" value="gene"/>
</dbReference>
<dbReference type="neXtProt" id="NX_A8MZ59"/>
<dbReference type="OpenTargets" id="ENSG00000213921"/>
<dbReference type="VEuPathDB" id="HostDB:ENSG00000213921"/>
<dbReference type="eggNOG" id="KOG2251">
    <property type="taxonomic scope" value="Eukaryota"/>
</dbReference>
<dbReference type="GeneTree" id="ENSGT00950000183093"/>
<dbReference type="HOGENOM" id="CLU_124748_0_0_1"/>
<dbReference type="InParanoid" id="A8MZ59"/>
<dbReference type="OMA" id="PYDMDQL"/>
<dbReference type="OrthoDB" id="9535093at2759"/>
<dbReference type="PAN-GO" id="A8MZ59">
    <property type="GO annotations" value="4 GO annotations based on evolutionary models"/>
</dbReference>
<dbReference type="PhylomeDB" id="A8MZ59"/>
<dbReference type="PathwayCommons" id="A8MZ59"/>
<dbReference type="Reactome" id="R-HSA-9819196">
    <property type="pathway name" value="Zygotic genome activation (ZGA)"/>
</dbReference>
<dbReference type="SignaLink" id="A8MZ59"/>
<dbReference type="BioGRID-ORCS" id="342900">
    <property type="hits" value="4 hits in 330 CRISPR screens"/>
</dbReference>
<dbReference type="GenomeRNAi" id="342900"/>
<dbReference type="Pharos" id="A8MZ59">
    <property type="development level" value="Tdark"/>
</dbReference>
<dbReference type="PRO" id="PR:A8MZ59"/>
<dbReference type="Proteomes" id="UP000005640">
    <property type="component" value="Chromosome 19"/>
</dbReference>
<dbReference type="RNAct" id="A8MZ59">
    <property type="molecule type" value="protein"/>
</dbReference>
<dbReference type="Bgee" id="ENSG00000213921">
    <property type="expression patterns" value="Expressed in male germ line stem cell (sensu Vertebrata) in testis and 7 other cell types or tissues"/>
</dbReference>
<dbReference type="GO" id="GO:0000785">
    <property type="term" value="C:chromatin"/>
    <property type="evidence" value="ECO:0000247"/>
    <property type="project" value="NTNU_SB"/>
</dbReference>
<dbReference type="GO" id="GO:0005654">
    <property type="term" value="C:nucleoplasm"/>
    <property type="evidence" value="ECO:0000304"/>
    <property type="project" value="Reactome"/>
</dbReference>
<dbReference type="GO" id="GO:0005634">
    <property type="term" value="C:nucleus"/>
    <property type="evidence" value="ECO:0000318"/>
    <property type="project" value="GO_Central"/>
</dbReference>
<dbReference type="GO" id="GO:0000981">
    <property type="term" value="F:DNA-binding transcription factor activity, RNA polymerase II-specific"/>
    <property type="evidence" value="ECO:0000247"/>
    <property type="project" value="NTNU_SB"/>
</dbReference>
<dbReference type="GO" id="GO:0000978">
    <property type="term" value="F:RNA polymerase II cis-regulatory region sequence-specific DNA binding"/>
    <property type="evidence" value="ECO:0000318"/>
    <property type="project" value="GO_Central"/>
</dbReference>
<dbReference type="GO" id="GO:0006357">
    <property type="term" value="P:regulation of transcription by RNA polymerase II"/>
    <property type="evidence" value="ECO:0000318"/>
    <property type="project" value="GO_Central"/>
</dbReference>
<dbReference type="CDD" id="cd00086">
    <property type="entry name" value="homeodomain"/>
    <property type="match status" value="1"/>
</dbReference>
<dbReference type="Gene3D" id="1.10.10.60">
    <property type="entry name" value="Homeodomain-like"/>
    <property type="match status" value="1"/>
</dbReference>
<dbReference type="InterPro" id="IPR001356">
    <property type="entry name" value="HD"/>
</dbReference>
<dbReference type="InterPro" id="IPR017970">
    <property type="entry name" value="Homeobox_CS"/>
</dbReference>
<dbReference type="InterPro" id="IPR009057">
    <property type="entry name" value="Homeodomain-like_sf"/>
</dbReference>
<dbReference type="PANTHER" id="PTHR45793">
    <property type="entry name" value="HOMEOBOX PROTEIN"/>
    <property type="match status" value="1"/>
</dbReference>
<dbReference type="PANTHER" id="PTHR45793:SF18">
    <property type="entry name" value="PAIRED-LIKE HOMEODOMAIN TRANSCRIPTION FACTOR LEUTX"/>
    <property type="match status" value="1"/>
</dbReference>
<dbReference type="Pfam" id="PF00046">
    <property type="entry name" value="Homeodomain"/>
    <property type="match status" value="1"/>
</dbReference>
<dbReference type="SMART" id="SM00389">
    <property type="entry name" value="HOX"/>
    <property type="match status" value="1"/>
</dbReference>
<dbReference type="SUPFAM" id="SSF46689">
    <property type="entry name" value="Homeodomain-like"/>
    <property type="match status" value="1"/>
</dbReference>
<dbReference type="PROSITE" id="PS00027">
    <property type="entry name" value="HOMEOBOX_1"/>
    <property type="match status" value="1"/>
</dbReference>
<dbReference type="PROSITE" id="PS50071">
    <property type="entry name" value="HOMEOBOX_2"/>
    <property type="match status" value="1"/>
</dbReference>
<keyword id="KW-0024">Alternative initiation</keyword>
<keyword id="KW-0238">DNA-binding</keyword>
<keyword id="KW-0371">Homeobox</keyword>
<keyword id="KW-0539">Nucleus</keyword>
<keyword id="KW-1185">Reference proteome</keyword>
<evidence type="ECO:0000255" key="1">
    <source>
        <dbReference type="PROSITE-ProRule" id="PRU00108"/>
    </source>
</evidence>
<evidence type="ECO:0000256" key="2">
    <source>
        <dbReference type="SAM" id="MobiDB-lite"/>
    </source>
</evidence>
<evidence type="ECO:0000269" key="3">
    <source>
    </source>
</evidence>
<evidence type="ECO:0000269" key="4">
    <source>
    </source>
</evidence>
<evidence type="ECO:0000303" key="5">
    <source>
    </source>
</evidence>
<evidence type="ECO:0000303" key="6">
    <source>
    </source>
</evidence>
<evidence type="ECO:0000305" key="7"/>
<evidence type="ECO:0000305" key="8">
    <source>
    </source>
</evidence>
<evidence type="ECO:0000312" key="9">
    <source>
        <dbReference type="HGNC" id="HGNC:31953"/>
    </source>
</evidence>
<sequence length="198" mass="22358">MFEGPRRYRRPRTRFLSKQLTALRELLEKTMHPSLATMGKLASKLQLDLSVVKIWFKNQRAKWKRQQRQQMQTRPSLGPANQTTSVKKEETPSAITTANIRPVSPGISDANDHDLREPSGIKNPGGASASARVSSWDSQSYDIEQICLGASNPPWASTLFEIDEFVKIYDLPGEDDTSSLNQYLFPVCLEYDQLQSSV</sequence>
<accession>A8MZ59</accession>
<accession>A0A1W2PQ33</accession>
<feature type="chain" id="PRO_0000343891" description="Paired-like homeodomain transcription factor LEUTX">
    <location>
        <begin position="1"/>
        <end position="198"/>
    </location>
</feature>
<feature type="DNA-binding region" description="Homeobox" evidence="1">
    <location>
        <begin position="33"/>
        <end position="67"/>
    </location>
</feature>
<feature type="region of interest" description="Disordered" evidence="2">
    <location>
        <begin position="65"/>
        <end position="133"/>
    </location>
</feature>
<feature type="region of interest" description="LEUTX region" evidence="6">
    <location>
        <begin position="79"/>
        <end position="190"/>
    </location>
</feature>
<feature type="short sequence motif" description="9aaTAD" evidence="6">
    <location>
        <begin position="125"/>
        <end position="136"/>
    </location>
</feature>
<feature type="short sequence motif" description="9aaTAD" evidence="6">
    <location>
        <begin position="153"/>
        <end position="161"/>
    </location>
</feature>
<feature type="short sequence motif" description="9aaTAD" evidence="6">
    <location>
        <begin position="163"/>
        <end position="171"/>
    </location>
</feature>
<feature type="short sequence motif" description="9aaTAD" evidence="6">
    <location>
        <begin position="178"/>
        <end position="186"/>
    </location>
</feature>
<feature type="compositionally biased region" description="Basic and acidic residues" evidence="2">
    <location>
        <begin position="110"/>
        <end position="119"/>
    </location>
</feature>
<feature type="site" description="Required for binding to the 5'-TAATCC-3' sequence" evidence="4">
    <location>
        <position position="54"/>
    </location>
</feature>
<feature type="site" description="Required for binding to the 5'-TAATCC-3' sequence" evidence="4">
    <location>
        <position position="57"/>
    </location>
</feature>
<feature type="site" description="Required for binding to the 5'-TAATCC-3' sequence" evidence="4">
    <location>
        <position position="61"/>
    </location>
</feature>
<feature type="splice variant" id="VSP_060567" description="In isoform 2.">
    <location>
        <begin position="1"/>
        <end position="30"/>
    </location>
</feature>
<feature type="mutagenesis site" description="Increased transcriptional activity; when associated with Ala-61-Val, restores wild-type transcriptional activity." evidence="4">
    <original>I</original>
    <variation>T</variation>
    <location>
        <position position="54"/>
    </location>
</feature>
<feature type="mutagenesis site" description="Abolished catalytic activity; when assiociated with Ile-54-Thr, restores wild-type transcriptional activity." evidence="4">
    <original>A</original>
    <variation>V</variation>
    <location>
        <position position="61"/>
    </location>
</feature>
<feature type="sequence conflict" description="In Ref. 3; DY655817." evidence="7" ref="3">
    <original>V</original>
    <variation>E</variation>
    <location>
        <position position="103"/>
    </location>
</feature>
<feature type="sequence conflict" description="In Ref. 3; DY655817." evidence="7" ref="3">
    <original>S</original>
    <variation>T</variation>
    <location>
        <position position="128"/>
    </location>
</feature>
<protein>
    <recommendedName>
        <fullName>Paired-like homeodomain transcription factor LEUTX</fullName>
    </recommendedName>
    <alternativeName>
        <fullName>Leucine-twenty homeobox</fullName>
    </alternativeName>
    <alternativeName>
        <fullName evidence="5">Paired-like homeobox transcription factor LEUTX</fullName>
        <shortName evidence="5">PRD-LIKE homeobox transcription factor LEUTX</shortName>
    </alternativeName>
</protein>
<gene>
    <name evidence="9" type="primary">LEUTX</name>
</gene>